<keyword id="KW-0091">Biomineralization</keyword>
<keyword id="KW-0130">Cell adhesion</keyword>
<keyword id="KW-0202">Cytokine</keyword>
<keyword id="KW-0903">Direct protein sequencing</keyword>
<keyword id="KW-0325">Glycoprotein</keyword>
<keyword id="KW-0597">Phosphoprotein</keyword>
<keyword id="KW-0654">Proteoglycan</keyword>
<keyword id="KW-1185">Reference proteome</keyword>
<keyword id="KW-0964">Secreted</keyword>
<keyword id="KW-0730">Sialic acid</keyword>
<keyword id="KW-0732">Signal</keyword>
<evidence type="ECO:0000250" key="1">
    <source>
        <dbReference type="UniProtKB" id="P10451"/>
    </source>
</evidence>
<evidence type="ECO:0000250" key="2">
    <source>
        <dbReference type="UniProtKB" id="P10923"/>
    </source>
</evidence>
<evidence type="ECO:0000256" key="3">
    <source>
        <dbReference type="SAM" id="MobiDB-lite"/>
    </source>
</evidence>
<evidence type="ECO:0000269" key="4">
    <source>
    </source>
</evidence>
<evidence type="ECO:0000269" key="5">
    <source>
    </source>
</evidence>
<evidence type="ECO:0000269" key="6">
    <source>
    </source>
</evidence>
<evidence type="ECO:0000269" key="7">
    <source>
    </source>
</evidence>
<evidence type="ECO:0000305" key="8"/>
<evidence type="ECO:0000305" key="9">
    <source>
    </source>
</evidence>
<protein>
    <recommendedName>
        <fullName>Osteopontin</fullName>
    </recommendedName>
    <alternativeName>
        <fullName>Bone sialoprotein 1</fullName>
    </alternativeName>
    <alternativeName>
        <fullName>Secreted phosphoprotein 1</fullName>
        <shortName>SPP-1</shortName>
    </alternativeName>
</protein>
<dbReference type="EMBL" id="M66236">
    <property type="protein sequence ID" value="AAA30462.1"/>
    <property type="molecule type" value="mRNA"/>
</dbReference>
<dbReference type="EMBL" id="AF492837">
    <property type="protein sequence ID" value="AAL99081.1"/>
    <property type="molecule type" value="mRNA"/>
</dbReference>
<dbReference type="EMBL" id="AY878328">
    <property type="protein sequence ID" value="AAX62809.1"/>
    <property type="molecule type" value="Genomic_DNA"/>
</dbReference>
<dbReference type="EMBL" id="AJ871176">
    <property type="protein sequence ID" value="CAI38798.1"/>
    <property type="molecule type" value="Genomic_DNA"/>
</dbReference>
<dbReference type="PIR" id="JS0638">
    <property type="entry name" value="JS0638"/>
</dbReference>
<dbReference type="RefSeq" id="NP_776612.1">
    <property type="nucleotide sequence ID" value="NM_174187.2"/>
</dbReference>
<dbReference type="RefSeq" id="XP_005207799.1">
    <property type="nucleotide sequence ID" value="XM_005207742.1"/>
</dbReference>
<dbReference type="ELM" id="P31096"/>
<dbReference type="FunCoup" id="P31096">
    <property type="interactions" value="257"/>
</dbReference>
<dbReference type="STRING" id="9913.ENSBTAP00000062863"/>
<dbReference type="GlyCosmos" id="P31096">
    <property type="glycosylation" value="3 sites, No reported glycans"/>
</dbReference>
<dbReference type="GlyGen" id="P31096">
    <property type="glycosylation" value="5 sites"/>
</dbReference>
<dbReference type="iPTMnet" id="P31096"/>
<dbReference type="PaxDb" id="9913-ENSBTAP00000044782"/>
<dbReference type="PeptideAtlas" id="P31096"/>
<dbReference type="GeneID" id="281499"/>
<dbReference type="KEGG" id="bta:281499"/>
<dbReference type="CTD" id="6696"/>
<dbReference type="eggNOG" id="ENOG502S5R4">
    <property type="taxonomic scope" value="Eukaryota"/>
</dbReference>
<dbReference type="InParanoid" id="P31096"/>
<dbReference type="OrthoDB" id="9047304at2759"/>
<dbReference type="Proteomes" id="UP000009136">
    <property type="component" value="Unplaced"/>
</dbReference>
<dbReference type="GO" id="GO:0005576">
    <property type="term" value="C:extracellular region"/>
    <property type="evidence" value="ECO:0000304"/>
    <property type="project" value="Reactome"/>
</dbReference>
<dbReference type="GO" id="GO:0005615">
    <property type="term" value="C:extracellular space"/>
    <property type="evidence" value="ECO:0000318"/>
    <property type="project" value="GO_Central"/>
</dbReference>
<dbReference type="GO" id="GO:0005125">
    <property type="term" value="F:cytokine activity"/>
    <property type="evidence" value="ECO:0007669"/>
    <property type="project" value="UniProtKB-KW"/>
</dbReference>
<dbReference type="GO" id="GO:0050840">
    <property type="term" value="F:extracellular matrix binding"/>
    <property type="evidence" value="ECO:0000318"/>
    <property type="project" value="GO_Central"/>
</dbReference>
<dbReference type="GO" id="GO:0005178">
    <property type="term" value="F:integrin binding"/>
    <property type="evidence" value="ECO:0000250"/>
    <property type="project" value="UniProtKB"/>
</dbReference>
<dbReference type="GO" id="GO:0031214">
    <property type="term" value="P:biomineral tissue development"/>
    <property type="evidence" value="ECO:0007669"/>
    <property type="project" value="UniProtKB-KW"/>
</dbReference>
<dbReference type="GO" id="GO:0007155">
    <property type="term" value="P:cell adhesion"/>
    <property type="evidence" value="ECO:0000318"/>
    <property type="project" value="GO_Central"/>
</dbReference>
<dbReference type="GO" id="GO:0001649">
    <property type="term" value="P:osteoblast differentiation"/>
    <property type="evidence" value="ECO:0000318"/>
    <property type="project" value="GO_Central"/>
</dbReference>
<dbReference type="GO" id="GO:0045780">
    <property type="term" value="P:positive regulation of bone resorption"/>
    <property type="evidence" value="ECO:0000318"/>
    <property type="project" value="GO_Central"/>
</dbReference>
<dbReference type="InterPro" id="IPR002038">
    <property type="entry name" value="Osteopontin"/>
</dbReference>
<dbReference type="InterPro" id="IPR019841">
    <property type="entry name" value="Osteopontin_CS"/>
</dbReference>
<dbReference type="PANTHER" id="PTHR10607">
    <property type="entry name" value="OSTEOPONTIN"/>
    <property type="match status" value="1"/>
</dbReference>
<dbReference type="PANTHER" id="PTHR10607:SF1">
    <property type="entry name" value="OSTEOPONTIN"/>
    <property type="match status" value="1"/>
</dbReference>
<dbReference type="Pfam" id="PF00865">
    <property type="entry name" value="Osteopontin"/>
    <property type="match status" value="2"/>
</dbReference>
<dbReference type="PRINTS" id="PR00216">
    <property type="entry name" value="OSTEOPONTIN"/>
</dbReference>
<dbReference type="SMART" id="SM00017">
    <property type="entry name" value="OSTEO"/>
    <property type="match status" value="1"/>
</dbReference>
<dbReference type="PROSITE" id="PS00884">
    <property type="entry name" value="OSTEOPONTIN"/>
    <property type="match status" value="1"/>
</dbReference>
<organism>
    <name type="scientific">Bos taurus</name>
    <name type="common">Bovine</name>
    <dbReference type="NCBI Taxonomy" id="9913"/>
    <lineage>
        <taxon>Eukaryota</taxon>
        <taxon>Metazoa</taxon>
        <taxon>Chordata</taxon>
        <taxon>Craniata</taxon>
        <taxon>Vertebrata</taxon>
        <taxon>Euteleostomi</taxon>
        <taxon>Mammalia</taxon>
        <taxon>Eutheria</taxon>
        <taxon>Laurasiatheria</taxon>
        <taxon>Artiodactyla</taxon>
        <taxon>Ruminantia</taxon>
        <taxon>Pecora</taxon>
        <taxon>Bovidae</taxon>
        <taxon>Bovinae</taxon>
        <taxon>Bos</taxon>
    </lineage>
</organism>
<accession>P31096</accession>
<accession>Q56NM9</accession>
<accession>Q8SPS6</accession>
<comment type="function">
    <text evidence="9">Major non-collagenous bone protein that binds tightly to hydroxyapatite (Probable). Appears to form an integral part of the mineralized matrix (Probable). Probably important to cell-matrix interaction (Probable).</text>
</comment>
<comment type="function">
    <text evidence="2">Acts as a cytokine involved in enhancing production of interferon-gamma and interleukin-12 and reducing production of interleukin-10 and is essential in the pathway that leads to type I immunity.</text>
</comment>
<comment type="subunit">
    <text evidence="2">Interacts (via N-terminus) with integrin ITGA9:ITGB1.</text>
</comment>
<comment type="subcellular location">
    <subcellularLocation>
        <location evidence="1">Secreted</location>
    </subcellularLocation>
</comment>
<comment type="tissue specificity">
    <text>Bone, inner ear, kidney, uterus, lung, brain, epidermis.</text>
</comment>
<comment type="PTM">
    <text evidence="1 2">Extensively phosphorylated by FAM20C in the extracellular medium at multiple sites within the S-x-E/pS motif (By similarity). The phosphorylated form inhibits hydroxyapatite crystallization. Dephosphorylation via a mechanism involving ALPL/TNAP promotes hydroxyapatite crystallization (By similarity).</text>
</comment>
<comment type="PTM">
    <text evidence="7">Forms covalent cross-links mediated by transglutaminase TGM2, between a glutamine and the epsilon-amino group of a lysine residue, forming homopolymers and heteropolymers, increasing its collagen binding properties.</text>
</comment>
<comment type="PTM">
    <text evidence="1">O-glycosylated.</text>
</comment>
<comment type="similarity">
    <text evidence="8">Belongs to the osteopontin family.</text>
</comment>
<gene>
    <name type="primary">SPP1</name>
    <name type="synonym">OPN</name>
</gene>
<reference key="1">
    <citation type="journal article" date="1991" name="Gene">
        <title>The cDNA cloning and RNA distribution of bovine osteopontin.</title>
        <authorList>
            <person name="Kerr J.M."/>
            <person name="Fisher L.W."/>
            <person name="Termine J.D."/>
            <person name="Young M.F."/>
        </authorList>
    </citation>
    <scope>NUCLEOTIDE SEQUENCE [MRNA]</scope>
</reference>
<reference key="2">
    <citation type="submission" date="2002-03" db="EMBL/GenBank/DDBJ databases">
        <title>Cloning of osteopontin (OPN) in Korean native cattle.</title>
        <authorList>
            <person name="Lee T.Y."/>
            <person name="Ju S.K."/>
            <person name="Nam M.S."/>
        </authorList>
    </citation>
    <scope>NUCLEOTIDE SEQUENCE [MRNA]</scope>
    <source>
        <strain>Korean</strain>
        <tissue>Kidney</tissue>
    </source>
</reference>
<reference key="3">
    <citation type="journal article" date="2005" name="Proc. Natl. Acad. Sci. U.S.A.">
        <title>Fine-mapping milk production quantitative trait loci on BTA6: Analysis of the bovine osteopontin gene.</title>
        <authorList>
            <person name="Schnabel R.D."/>
            <person name="Kim J.J."/>
            <person name="Ashwell M.S."/>
            <person name="Sonstegard T.S."/>
            <person name="Van Tassell C.P."/>
            <person name="Connor E.E."/>
            <person name="Taylor J.F."/>
        </authorList>
    </citation>
    <scope>NUCLEOTIDE SEQUENCE [GENOMIC DNA]</scope>
</reference>
<reference key="4">
    <citation type="journal article" date="2005" name="Genome Res.">
        <title>Identification of a missense mutation in the bovine ABCG2 gene with a major effect on the QTL on chromosome 6 affecting milk yield and composition in Holstein cattle.</title>
        <authorList>
            <person name="Cohen-Zinder M."/>
            <person name="Seroussi E."/>
            <person name="Larkin D.M."/>
            <person name="Loor J.J."/>
            <person name="Everts-van der Wind A."/>
            <person name="Lee J.-H."/>
            <person name="Drackley J.K."/>
            <person name="Band M.R."/>
            <person name="Hernandez A.G."/>
            <person name="Shani M."/>
            <person name="Lewin H.A."/>
            <person name="Weller J.I."/>
            <person name="Ron M."/>
        </authorList>
    </citation>
    <scope>NUCLEOTIDE SEQUENCE [GENOMIC DNA]</scope>
    <source>
        <strain>Holstein</strain>
    </source>
</reference>
<reference key="5">
    <citation type="journal article" date="1993" name="J. Dairy Res.">
        <title>Purification and characterization of three proteins isolated from the proteose peptone fraction of bovine milk.</title>
        <authorList>
            <person name="Soerensen E.S."/>
            <person name="Petersen T.E."/>
        </authorList>
    </citation>
    <scope>PROTEIN SEQUENCE OF 17-22; 44-54; 168-182 AND 221-243</scope>
    <source>
        <tissue>Milk</tissue>
    </source>
</reference>
<reference key="6">
    <citation type="journal article" date="1996" name="J. Biol. Chem.">
        <title>Phosphorylation of purified bovine bone sialoprotein and osteopontin by protein kinases.</title>
        <authorList>
            <person name="Salih E."/>
            <person name="Zhou H.-Y."/>
            <person name="Glimcher M.J."/>
        </authorList>
    </citation>
    <scope>PROTEIN SEQUENCE OF 17-28</scope>
    <scope>PHOSPHORYLATION</scope>
</reference>
<reference key="7">
    <citation type="journal article" date="1995" name="Protein Sci.">
        <title>Posttranslational modifications of bovine osteopontin: identification of twenty-eight phosphorylation and three O-glycosylation sites.</title>
        <authorList>
            <person name="Soerensen E.S."/>
            <person name="Hoejrup P."/>
            <person name="Petersen T.E."/>
        </authorList>
    </citation>
    <scope>PHOSPHORYLATION AT SER-23; SER-24; SER-26; SER-27; SER-60; SER-62; SER-63; SER-76; SER-78; SER-81; SER-95; SER-100; SER-103; SER-115; SER-121; SER-124; THR-178; SER-184; SER-188; SER-205; SER-210; SER-233; SER-240; SER-245; SER-256; SER-267; SER-272 AND SER-274</scope>
    <source>
        <tissue>Milk</tissue>
    </source>
</reference>
<reference key="8">
    <citation type="journal article" date="1999" name="J. Biol. Chem.">
        <title>Cross-linking of osteopontin by tissue transglutaminase increases its collagen binding properties.</title>
        <authorList>
            <person name="Kaartinen M.T."/>
            <person name="Pirhonen A."/>
            <person name="Linnala-Kankkunen A."/>
            <person name="Maeenpaeae P.H."/>
        </authorList>
    </citation>
    <scope>FUNCTION</scope>
    <scope>TRANSGLUTAMINATION</scope>
</reference>
<name>OSTP_BOVIN</name>
<feature type="signal peptide" evidence="4 6">
    <location>
        <begin position="1"/>
        <end position="16"/>
    </location>
</feature>
<feature type="chain" id="PRO_0000020320" description="Osteopontin">
    <location>
        <begin position="17"/>
        <end position="278"/>
    </location>
</feature>
<feature type="region of interest" description="Disordered" evidence="3">
    <location>
        <begin position="38"/>
        <end position="278"/>
    </location>
</feature>
<feature type="short sequence motif" description="Cell attachment site">
    <location>
        <begin position="152"/>
        <end position="154"/>
    </location>
</feature>
<feature type="compositionally biased region" description="Polar residues" evidence="3">
    <location>
        <begin position="49"/>
        <end position="63"/>
    </location>
</feature>
<feature type="compositionally biased region" description="Polar residues" evidence="3">
    <location>
        <begin position="71"/>
        <end position="82"/>
    </location>
</feature>
<feature type="compositionally biased region" description="Acidic residues" evidence="3">
    <location>
        <begin position="83"/>
        <end position="95"/>
    </location>
</feature>
<feature type="compositionally biased region" description="Basic and acidic residues" evidence="3">
    <location>
        <begin position="111"/>
        <end position="122"/>
    </location>
</feature>
<feature type="compositionally biased region" description="Basic and acidic residues" evidence="3">
    <location>
        <begin position="182"/>
        <end position="196"/>
    </location>
</feature>
<feature type="compositionally biased region" description="Basic and acidic residues" evidence="3">
    <location>
        <begin position="203"/>
        <end position="222"/>
    </location>
</feature>
<feature type="compositionally biased region" description="Polar residues" evidence="3">
    <location>
        <begin position="228"/>
        <end position="243"/>
    </location>
</feature>
<feature type="compositionally biased region" description="Basic and acidic residues" evidence="3">
    <location>
        <begin position="244"/>
        <end position="271"/>
    </location>
</feature>
<feature type="site" description="Not glycosylated">
    <location>
        <position position="79"/>
    </location>
</feature>
<feature type="site" description="Not glycosylated">
    <location>
        <position position="101"/>
    </location>
</feature>
<feature type="site" description="Not glycosylated">
    <location>
        <position position="209"/>
    </location>
</feature>
<feature type="modified residue" description="Phosphoserine" evidence="5">
    <location>
        <position position="23"/>
    </location>
</feature>
<feature type="modified residue" description="Phosphoserine" evidence="5">
    <location>
        <position position="24"/>
    </location>
</feature>
<feature type="modified residue" description="Phosphoserine" evidence="5">
    <location>
        <position position="26"/>
    </location>
</feature>
<feature type="modified residue" description="Phosphoserine" evidence="5">
    <location>
        <position position="27"/>
    </location>
</feature>
<feature type="modified residue" description="Phosphoserine" evidence="5">
    <location>
        <position position="60"/>
    </location>
</feature>
<feature type="modified residue" description="Phosphoserine" evidence="5">
    <location>
        <position position="62"/>
    </location>
</feature>
<feature type="modified residue" description="Phosphoserine" evidence="5">
    <location>
        <position position="63"/>
    </location>
</feature>
<feature type="modified residue" description="Phosphothreonine" evidence="1">
    <location>
        <position position="66"/>
    </location>
</feature>
<feature type="modified residue" description="Phosphoserine" evidence="5">
    <location>
        <position position="76"/>
    </location>
</feature>
<feature type="modified residue" description="Phosphoserine" evidence="5">
    <location>
        <position position="78"/>
    </location>
</feature>
<feature type="modified residue" description="Phosphoserine" evidence="5">
    <location>
        <position position="81"/>
    </location>
</feature>
<feature type="modified residue" description="Phosphoserine" evidence="5">
    <location>
        <position position="95"/>
    </location>
</feature>
<feature type="modified residue" description="Phosphoserine" evidence="5">
    <location>
        <position position="100"/>
    </location>
</feature>
<feature type="modified residue" description="Phosphoserine" evidence="5">
    <location>
        <position position="103"/>
    </location>
</feature>
<feature type="modified residue" description="Phosphoserine" evidence="5">
    <location>
        <position position="115"/>
    </location>
</feature>
<feature type="modified residue" description="Phosphoserine" evidence="1">
    <location>
        <position position="118"/>
    </location>
</feature>
<feature type="modified residue" description="Phosphoserine" evidence="5">
    <location>
        <position position="121"/>
    </location>
</feature>
<feature type="modified residue" description="Phosphoserine" evidence="5">
    <location>
        <position position="124"/>
    </location>
</feature>
<feature type="modified residue" description="Phosphothreonine" evidence="5">
    <location>
        <position position="178"/>
    </location>
</feature>
<feature type="modified residue" description="Phosphothreonine" evidence="1">
    <location>
        <position position="183"/>
    </location>
</feature>
<feature type="modified residue" description="Phosphoserine" evidence="5">
    <location>
        <position position="184"/>
    </location>
</feature>
<feature type="modified residue" description="Phosphoserine" evidence="5">
    <location>
        <position position="188"/>
    </location>
</feature>
<feature type="modified residue" description="Phosphoserine" evidence="1">
    <location>
        <position position="199"/>
    </location>
</feature>
<feature type="modified residue" description="Phosphoserine" evidence="5">
    <location>
        <position position="205"/>
    </location>
</feature>
<feature type="modified residue" description="Phosphothreonine" evidence="1">
    <location>
        <position position="208"/>
    </location>
</feature>
<feature type="modified residue" description="Phosphoserine" evidence="5">
    <location>
        <position position="210"/>
    </location>
</feature>
<feature type="modified residue" description="Phosphoserine" evidence="1">
    <location>
        <position position="214"/>
    </location>
</feature>
<feature type="modified residue" description="Phosphoserine" evidence="1">
    <location>
        <position position="228"/>
    </location>
</feature>
<feature type="modified residue" description="Phosphoserine" evidence="5">
    <location>
        <position position="233"/>
    </location>
</feature>
<feature type="modified residue" description="Phosphoserine" evidence="1">
    <location>
        <position position="237"/>
    </location>
</feature>
<feature type="modified residue" description="Phosphoserine" evidence="5">
    <location>
        <position position="240"/>
    </location>
</feature>
<feature type="modified residue" description="Phosphoserine" evidence="5">
    <location>
        <position position="245"/>
    </location>
</feature>
<feature type="modified residue" description="Phosphoserine" evidence="5">
    <location>
        <position position="256"/>
    </location>
</feature>
<feature type="modified residue" description="Phosphoserine" evidence="5">
    <location>
        <position position="267"/>
    </location>
</feature>
<feature type="modified residue" description="Phosphoserine" evidence="5">
    <location>
        <position position="272"/>
    </location>
</feature>
<feature type="modified residue" description="Phosphoserine" evidence="5">
    <location>
        <position position="274"/>
    </location>
</feature>
<feature type="modified residue" description="Phosphoserine" evidence="1">
    <location>
        <position position="275"/>
    </location>
</feature>
<feature type="glycosylation site" description="O-linked (GalNAc...) threonine">
    <location>
        <position position="131"/>
    </location>
</feature>
<feature type="glycosylation site" description="O-linked (GalNAc...) threonine">
    <location>
        <position position="140"/>
    </location>
</feature>
<feature type="glycosylation site" description="O-linked (GalNAc...) threonine">
    <location>
        <position position="145"/>
    </location>
</feature>
<feature type="glycosylation site" description="O-linked (Xyl...) (chondroitin sulfate) serine" evidence="1">
    <location>
        <position position="205"/>
    </location>
</feature>
<feature type="glycosylation site" description="O-linked (Xyl...) (chondroitin sulfate) serine" evidence="1">
    <location>
        <position position="272"/>
    </location>
</feature>
<feature type="sequence conflict" description="In Ref. 6; AA sequence." evidence="8" ref="6">
    <original>S</original>
    <variation>K</variation>
    <location>
        <position position="27"/>
    </location>
</feature>
<feature type="sequence conflict" description="In Ref. 1; AAA30462." evidence="8" ref="1">
    <original>T</original>
    <variation>I</variation>
    <location>
        <position position="42"/>
    </location>
</feature>
<feature type="sequence conflict" description="In Ref. 1; AAA30462." evidence="8" ref="1">
    <original>A</original>
    <variation>T</variation>
    <location>
        <position position="56"/>
    </location>
</feature>
<proteinExistence type="evidence at protein level"/>
<sequence length="278" mass="30904">MRIAVICFCLLGIASALPVKPTSSGSSEEKQLNNKYPDAVATWLKPDPSQKQTFLAPQNSVSSEETDDNKQNTLPSKSNESPEQTDDLDDDDDNSQDVNSNDSDDAETTDDPDHSDESHHSDESDEVDFPTDIPTIAVFTPFIPTESANDGRGDSVAYGLKSRSKKFRRSNVQSPDATEEDFTSHIESEEMHDAPKKTSQLTDHSKETNSSELSKELTPKAKDKNKHSNLIESQENSKLSQEFHSLEDKLDLDHKSEEDKHLKIRISHELDSASSEVN</sequence>